<sequence length="103" mass="11840">MITKDKIRVRLFSFDVKILDQSAESIVRAVQKSKAQIKGPIPLPTKIKKYTVLRSPHVNKKSREQFEMRTHKRLIDILEPTSALMDSLMKLELPAGVEVDIKQ</sequence>
<proteinExistence type="inferred from homology"/>
<gene>
    <name evidence="1" type="primary">rpsJ</name>
    <name type="ordered locus">BDU_480</name>
</gene>
<accession>B5RM35</accession>
<comment type="function">
    <text evidence="1">Involved in the binding of tRNA to the ribosomes.</text>
</comment>
<comment type="subunit">
    <text evidence="1">Part of the 30S ribosomal subunit.</text>
</comment>
<comment type="similarity">
    <text evidence="1">Belongs to the universal ribosomal protein uS10 family.</text>
</comment>
<dbReference type="EMBL" id="CP000976">
    <property type="protein sequence ID" value="ACH93421.1"/>
    <property type="molecule type" value="Genomic_DNA"/>
</dbReference>
<dbReference type="RefSeq" id="WP_011772424.1">
    <property type="nucleotide sequence ID" value="NC_011229.1"/>
</dbReference>
<dbReference type="SMR" id="B5RM35"/>
<dbReference type="STRING" id="412419.BDU_480"/>
<dbReference type="GeneID" id="71843295"/>
<dbReference type="KEGG" id="bdu:BDU_480"/>
<dbReference type="eggNOG" id="COG0051">
    <property type="taxonomic scope" value="Bacteria"/>
</dbReference>
<dbReference type="HOGENOM" id="CLU_122625_1_3_12"/>
<dbReference type="OrthoDB" id="9804464at2"/>
<dbReference type="Proteomes" id="UP000000611">
    <property type="component" value="Chromosome"/>
</dbReference>
<dbReference type="GO" id="GO:1990904">
    <property type="term" value="C:ribonucleoprotein complex"/>
    <property type="evidence" value="ECO:0007669"/>
    <property type="project" value="UniProtKB-KW"/>
</dbReference>
<dbReference type="GO" id="GO:0005840">
    <property type="term" value="C:ribosome"/>
    <property type="evidence" value="ECO:0007669"/>
    <property type="project" value="UniProtKB-KW"/>
</dbReference>
<dbReference type="GO" id="GO:0003735">
    <property type="term" value="F:structural constituent of ribosome"/>
    <property type="evidence" value="ECO:0007669"/>
    <property type="project" value="InterPro"/>
</dbReference>
<dbReference type="GO" id="GO:0000049">
    <property type="term" value="F:tRNA binding"/>
    <property type="evidence" value="ECO:0007669"/>
    <property type="project" value="UniProtKB-UniRule"/>
</dbReference>
<dbReference type="GO" id="GO:0006412">
    <property type="term" value="P:translation"/>
    <property type="evidence" value="ECO:0007669"/>
    <property type="project" value="UniProtKB-UniRule"/>
</dbReference>
<dbReference type="FunFam" id="3.30.70.600:FF:000003">
    <property type="entry name" value="30S ribosomal protein S10"/>
    <property type="match status" value="1"/>
</dbReference>
<dbReference type="Gene3D" id="3.30.70.600">
    <property type="entry name" value="Ribosomal protein S10 domain"/>
    <property type="match status" value="1"/>
</dbReference>
<dbReference type="HAMAP" id="MF_00508">
    <property type="entry name" value="Ribosomal_uS10"/>
    <property type="match status" value="1"/>
</dbReference>
<dbReference type="InterPro" id="IPR001848">
    <property type="entry name" value="Ribosomal_uS10"/>
</dbReference>
<dbReference type="InterPro" id="IPR027486">
    <property type="entry name" value="Ribosomal_uS10_dom"/>
</dbReference>
<dbReference type="InterPro" id="IPR036838">
    <property type="entry name" value="Ribosomal_uS10_dom_sf"/>
</dbReference>
<dbReference type="NCBIfam" id="NF001861">
    <property type="entry name" value="PRK00596.1"/>
    <property type="match status" value="1"/>
</dbReference>
<dbReference type="NCBIfam" id="TIGR01049">
    <property type="entry name" value="rpsJ_bact"/>
    <property type="match status" value="1"/>
</dbReference>
<dbReference type="PANTHER" id="PTHR11700">
    <property type="entry name" value="30S RIBOSOMAL PROTEIN S10 FAMILY MEMBER"/>
    <property type="match status" value="1"/>
</dbReference>
<dbReference type="Pfam" id="PF00338">
    <property type="entry name" value="Ribosomal_S10"/>
    <property type="match status" value="1"/>
</dbReference>
<dbReference type="PRINTS" id="PR00971">
    <property type="entry name" value="RIBOSOMALS10"/>
</dbReference>
<dbReference type="SMART" id="SM01403">
    <property type="entry name" value="Ribosomal_S10"/>
    <property type="match status" value="1"/>
</dbReference>
<dbReference type="SUPFAM" id="SSF54999">
    <property type="entry name" value="Ribosomal protein S10"/>
    <property type="match status" value="1"/>
</dbReference>
<keyword id="KW-0687">Ribonucleoprotein</keyword>
<keyword id="KW-0689">Ribosomal protein</keyword>
<name>RS10_BORDL</name>
<feature type="chain" id="PRO_1000127084" description="Small ribosomal subunit protein uS10">
    <location>
        <begin position="1"/>
        <end position="103"/>
    </location>
</feature>
<organism>
    <name type="scientific">Borrelia duttonii (strain Ly)</name>
    <dbReference type="NCBI Taxonomy" id="412419"/>
    <lineage>
        <taxon>Bacteria</taxon>
        <taxon>Pseudomonadati</taxon>
        <taxon>Spirochaetota</taxon>
        <taxon>Spirochaetia</taxon>
        <taxon>Spirochaetales</taxon>
        <taxon>Borreliaceae</taxon>
        <taxon>Borrelia</taxon>
    </lineage>
</organism>
<evidence type="ECO:0000255" key="1">
    <source>
        <dbReference type="HAMAP-Rule" id="MF_00508"/>
    </source>
</evidence>
<evidence type="ECO:0000305" key="2"/>
<protein>
    <recommendedName>
        <fullName evidence="1">Small ribosomal subunit protein uS10</fullName>
    </recommendedName>
    <alternativeName>
        <fullName evidence="2">30S ribosomal protein S10</fullName>
    </alternativeName>
</protein>
<reference key="1">
    <citation type="journal article" date="2008" name="PLoS Genet.">
        <title>The genome of Borrelia recurrentis, the agent of deadly louse-borne relapsing fever, is a degraded subset of tick-borne Borrelia duttonii.</title>
        <authorList>
            <person name="Lescot M."/>
            <person name="Audic S."/>
            <person name="Robert C."/>
            <person name="Nguyen T.T."/>
            <person name="Blanc G."/>
            <person name="Cutler S.J."/>
            <person name="Wincker P."/>
            <person name="Couloux A."/>
            <person name="Claverie J.-M."/>
            <person name="Raoult D."/>
            <person name="Drancourt M."/>
        </authorList>
    </citation>
    <scope>NUCLEOTIDE SEQUENCE [LARGE SCALE GENOMIC DNA]</scope>
    <source>
        <strain>Ly</strain>
    </source>
</reference>